<reference key="1">
    <citation type="submission" date="2008-10" db="EMBL/GenBank/DDBJ databases">
        <title>The complete genome sequence of Helicobacter pylori strain P12.</title>
        <authorList>
            <person name="Fischer W."/>
            <person name="Windhager L."/>
            <person name="Karnholz A."/>
            <person name="Zeiller M."/>
            <person name="Zimmer R."/>
            <person name="Haas R."/>
        </authorList>
    </citation>
    <scope>NUCLEOTIDE SEQUENCE [LARGE SCALE GENOMIC DNA]</scope>
    <source>
        <strain>P12</strain>
    </source>
</reference>
<accession>B6JLQ2</accession>
<proteinExistence type="inferred from homology"/>
<name>Y677_HELP2</name>
<evidence type="ECO:0000255" key="1">
    <source>
        <dbReference type="HAMAP-Rule" id="MF_02110"/>
    </source>
</evidence>
<protein>
    <recommendedName>
        <fullName evidence="1">UPF0763 protein HPP12_0677</fullName>
    </recommendedName>
</protein>
<dbReference type="EMBL" id="CP001217">
    <property type="protein sequence ID" value="ACJ07830.1"/>
    <property type="molecule type" value="Genomic_DNA"/>
</dbReference>
<dbReference type="KEGG" id="hpp:HPP12_0677"/>
<dbReference type="HOGENOM" id="CLU_120359_0_0_7"/>
<dbReference type="Proteomes" id="UP000008198">
    <property type="component" value="Chromosome"/>
</dbReference>
<dbReference type="HAMAP" id="MF_02110">
    <property type="entry name" value="UPF0763"/>
    <property type="match status" value="1"/>
</dbReference>
<dbReference type="InterPro" id="IPR019724">
    <property type="entry name" value="UPF0763"/>
</dbReference>
<dbReference type="Pfam" id="PF10788">
    <property type="entry name" value="DUF2603"/>
    <property type="match status" value="1"/>
</dbReference>
<comment type="similarity">
    <text evidence="1">Belongs to the UPF0763 family.</text>
</comment>
<organism>
    <name type="scientific">Helicobacter pylori (strain P12)</name>
    <dbReference type="NCBI Taxonomy" id="570508"/>
    <lineage>
        <taxon>Bacteria</taxon>
        <taxon>Pseudomonadati</taxon>
        <taxon>Campylobacterota</taxon>
        <taxon>Epsilonproteobacteria</taxon>
        <taxon>Campylobacterales</taxon>
        <taxon>Helicobacteraceae</taxon>
        <taxon>Helicobacter</taxon>
    </lineage>
</organism>
<feature type="chain" id="PRO_0000394791" description="UPF0763 protein HPP12_0677">
    <location>
        <begin position="1"/>
        <end position="171"/>
    </location>
</feature>
<gene>
    <name type="ordered locus">HPP12_0677</name>
</gene>
<sequence length="171" mass="20110">MEKLPKKRVSKTKSQKLIHSLTTQKNRAFLKKISANEMLLELEKGAFKKNEAYFISDEEDKNYVLVPDNVISLLAENARKAFEARLRAELERDIITQAPIDFEDVREVSLQLLENLRQKDGNLPNINTLNFVKQIKKEHPNLFFNFDNMFKQPPFNENNFENFDNSDEENF</sequence>